<gene>
    <name evidence="1" type="primary">tdh</name>
    <name type="ordered locus">FTN_0625</name>
</gene>
<reference key="1">
    <citation type="journal article" date="2007" name="Genome Biol.">
        <title>Comparison of Francisella tularensis genomes reveals evolutionary events associated with the emergence of human pathogenic strains.</title>
        <authorList>
            <person name="Rohmer L."/>
            <person name="Fong C."/>
            <person name="Abmayr S."/>
            <person name="Wasnick M."/>
            <person name="Larson Freeman T.J."/>
            <person name="Radey M."/>
            <person name="Guina T."/>
            <person name="Svensson K."/>
            <person name="Hayden H.S."/>
            <person name="Jacobs M."/>
            <person name="Gallagher L.A."/>
            <person name="Manoil C."/>
            <person name="Ernst R.K."/>
            <person name="Drees B."/>
            <person name="Buckley D."/>
            <person name="Haugen E."/>
            <person name="Bovee D."/>
            <person name="Zhou Y."/>
            <person name="Chang J."/>
            <person name="Levy R."/>
            <person name="Lim R."/>
            <person name="Gillett W."/>
            <person name="Guenthener D."/>
            <person name="Kang A."/>
            <person name="Shaffer S.A."/>
            <person name="Taylor G."/>
            <person name="Chen J."/>
            <person name="Gallis B."/>
            <person name="D'Argenio D.A."/>
            <person name="Forsman M."/>
            <person name="Olson M.V."/>
            <person name="Goodlett D.R."/>
            <person name="Kaul R."/>
            <person name="Miller S.I."/>
            <person name="Brittnacher M.J."/>
        </authorList>
    </citation>
    <scope>NUCLEOTIDE SEQUENCE [LARGE SCALE GENOMIC DNA]</scope>
    <source>
        <strain>U112</strain>
    </source>
</reference>
<keyword id="KW-0963">Cytoplasm</keyword>
<keyword id="KW-0479">Metal-binding</keyword>
<keyword id="KW-0520">NAD</keyword>
<keyword id="KW-0560">Oxidoreductase</keyword>
<keyword id="KW-0862">Zinc</keyword>
<comment type="function">
    <text evidence="1">Catalyzes the NAD(+)-dependent oxidation of L-threonine to 2-amino-3-ketobutyrate.</text>
</comment>
<comment type="catalytic activity">
    <reaction evidence="1">
        <text>L-threonine + NAD(+) = (2S)-2-amino-3-oxobutanoate + NADH + H(+)</text>
        <dbReference type="Rhea" id="RHEA:13161"/>
        <dbReference type="ChEBI" id="CHEBI:15378"/>
        <dbReference type="ChEBI" id="CHEBI:57540"/>
        <dbReference type="ChEBI" id="CHEBI:57926"/>
        <dbReference type="ChEBI" id="CHEBI:57945"/>
        <dbReference type="ChEBI" id="CHEBI:78948"/>
        <dbReference type="EC" id="1.1.1.103"/>
    </reaction>
</comment>
<comment type="cofactor">
    <cofactor evidence="1">
        <name>Zn(2+)</name>
        <dbReference type="ChEBI" id="CHEBI:29105"/>
    </cofactor>
    <text evidence="1">Binds 2 Zn(2+) ions per subunit.</text>
</comment>
<comment type="pathway">
    <text evidence="1">Amino-acid degradation; L-threonine degradation via oxydo-reductase pathway; glycine from L-threonine: step 1/2.</text>
</comment>
<comment type="subunit">
    <text evidence="1">Homotetramer.</text>
</comment>
<comment type="subcellular location">
    <subcellularLocation>
        <location evidence="1">Cytoplasm</location>
    </subcellularLocation>
</comment>
<comment type="similarity">
    <text evidence="1">Belongs to the zinc-containing alcohol dehydrogenase family.</text>
</comment>
<feature type="chain" id="PRO_1000051639" description="L-threonine 3-dehydrogenase">
    <location>
        <begin position="1"/>
        <end position="351"/>
    </location>
</feature>
<feature type="active site" description="Charge relay system" evidence="1">
    <location>
        <position position="41"/>
    </location>
</feature>
<feature type="active site" description="Charge relay system" evidence="1">
    <location>
        <position position="44"/>
    </location>
</feature>
<feature type="binding site" evidence="1">
    <location>
        <position position="39"/>
    </location>
    <ligand>
        <name>Zn(2+)</name>
        <dbReference type="ChEBI" id="CHEBI:29105"/>
        <label>1</label>
        <note>catalytic</note>
    </ligand>
</feature>
<feature type="binding site" evidence="1">
    <location>
        <position position="64"/>
    </location>
    <ligand>
        <name>Zn(2+)</name>
        <dbReference type="ChEBI" id="CHEBI:29105"/>
        <label>1</label>
        <note>catalytic</note>
    </ligand>
</feature>
<feature type="binding site" evidence="1">
    <location>
        <position position="65"/>
    </location>
    <ligand>
        <name>Zn(2+)</name>
        <dbReference type="ChEBI" id="CHEBI:29105"/>
        <label>1</label>
        <note>catalytic</note>
    </ligand>
</feature>
<feature type="binding site" evidence="1">
    <location>
        <position position="94"/>
    </location>
    <ligand>
        <name>Zn(2+)</name>
        <dbReference type="ChEBI" id="CHEBI:29105"/>
        <label>2</label>
    </ligand>
</feature>
<feature type="binding site" evidence="1">
    <location>
        <position position="97"/>
    </location>
    <ligand>
        <name>Zn(2+)</name>
        <dbReference type="ChEBI" id="CHEBI:29105"/>
        <label>2</label>
    </ligand>
</feature>
<feature type="binding site" evidence="1">
    <location>
        <position position="100"/>
    </location>
    <ligand>
        <name>Zn(2+)</name>
        <dbReference type="ChEBI" id="CHEBI:29105"/>
        <label>2</label>
    </ligand>
</feature>
<feature type="binding site" evidence="1">
    <location>
        <position position="108"/>
    </location>
    <ligand>
        <name>Zn(2+)</name>
        <dbReference type="ChEBI" id="CHEBI:29105"/>
        <label>2</label>
    </ligand>
</feature>
<feature type="binding site" evidence="1">
    <location>
        <position position="176"/>
    </location>
    <ligand>
        <name>NAD(+)</name>
        <dbReference type="ChEBI" id="CHEBI:57540"/>
    </ligand>
</feature>
<feature type="binding site" evidence="1">
    <location>
        <position position="196"/>
    </location>
    <ligand>
        <name>NAD(+)</name>
        <dbReference type="ChEBI" id="CHEBI:57540"/>
    </ligand>
</feature>
<feature type="binding site" evidence="1">
    <location>
        <position position="201"/>
    </location>
    <ligand>
        <name>NAD(+)</name>
        <dbReference type="ChEBI" id="CHEBI:57540"/>
    </ligand>
</feature>
<feature type="binding site" evidence="1">
    <location>
        <begin position="271"/>
        <end position="273"/>
    </location>
    <ligand>
        <name>NAD(+)</name>
        <dbReference type="ChEBI" id="CHEBI:57540"/>
    </ligand>
</feature>
<feature type="binding site" evidence="1">
    <location>
        <begin position="295"/>
        <end position="296"/>
    </location>
    <ligand>
        <name>NAD(+)</name>
        <dbReference type="ChEBI" id="CHEBI:57540"/>
    </ligand>
</feature>
<feature type="site" description="Important for catalytic activity for the proton relay mechanism but does not participate directly in the coordination of zinc atom" evidence="1">
    <location>
        <position position="149"/>
    </location>
</feature>
<sequence>MKALAKLKKQPGIWMIDDAPIPEYGYNDVLIKIKKTAICGTDLHIYNWDKWSQNTIPVPMITGHEFAGEVVAKGDGVTSVDIGDRVSGEGHLVCGQCRNCRAGKRHLCRKTIGIGVNVQGAFAEYLVMPAVNVFKIPDSISDDIASTFDPMGNAIHTALSFNLTGEDVLITGAGPIGLMAVKIARFCGARRIVITDINEYRLQMARDFGATVALNVAPFKNQDELVKQMRKVMSDIGMTEGFDIGLEMSGINSAISMMLDVMNHGGKLSLLGISAGDISVDWGAILFKGLTLKGIYGREMFETWYLMTSMLQAGMDMNPIITHRLHIDEFQKGFEIMKSGQCGKVILDWSS</sequence>
<protein>
    <recommendedName>
        <fullName evidence="1">L-threonine 3-dehydrogenase</fullName>
        <shortName evidence="1">TDH</shortName>
        <ecNumber evidence="1">1.1.1.103</ecNumber>
    </recommendedName>
</protein>
<accession>A0Q5K3</accession>
<organism>
    <name type="scientific">Francisella tularensis subsp. novicida (strain U112)</name>
    <dbReference type="NCBI Taxonomy" id="401614"/>
    <lineage>
        <taxon>Bacteria</taxon>
        <taxon>Pseudomonadati</taxon>
        <taxon>Pseudomonadota</taxon>
        <taxon>Gammaproteobacteria</taxon>
        <taxon>Thiotrichales</taxon>
        <taxon>Francisellaceae</taxon>
        <taxon>Francisella</taxon>
    </lineage>
</organism>
<name>TDH_FRATN</name>
<dbReference type="EC" id="1.1.1.103" evidence="1"/>
<dbReference type="EMBL" id="CP000439">
    <property type="protein sequence ID" value="ABK89518.1"/>
    <property type="molecule type" value="Genomic_DNA"/>
</dbReference>
<dbReference type="RefSeq" id="WP_003038692.1">
    <property type="nucleotide sequence ID" value="NC_008601.1"/>
</dbReference>
<dbReference type="SMR" id="A0Q5K3"/>
<dbReference type="KEGG" id="ftn:FTN_0625"/>
<dbReference type="KEGG" id="ftx:AW25_1401"/>
<dbReference type="BioCyc" id="FTUL401614:G1G75-650-MONOMER"/>
<dbReference type="UniPathway" id="UPA00046">
    <property type="reaction ID" value="UER00505"/>
</dbReference>
<dbReference type="Proteomes" id="UP000000762">
    <property type="component" value="Chromosome"/>
</dbReference>
<dbReference type="GO" id="GO:0005737">
    <property type="term" value="C:cytoplasm"/>
    <property type="evidence" value="ECO:0007669"/>
    <property type="project" value="UniProtKB-SubCell"/>
</dbReference>
<dbReference type="GO" id="GO:0008743">
    <property type="term" value="F:L-threonine 3-dehydrogenase activity"/>
    <property type="evidence" value="ECO:0007669"/>
    <property type="project" value="UniProtKB-UniRule"/>
</dbReference>
<dbReference type="GO" id="GO:0008270">
    <property type="term" value="F:zinc ion binding"/>
    <property type="evidence" value="ECO:0007669"/>
    <property type="project" value="UniProtKB-UniRule"/>
</dbReference>
<dbReference type="GO" id="GO:0019518">
    <property type="term" value="P:L-threonine catabolic process to glycine"/>
    <property type="evidence" value="ECO:0007669"/>
    <property type="project" value="UniProtKB-UniPathway"/>
</dbReference>
<dbReference type="Gene3D" id="3.90.180.10">
    <property type="entry name" value="Medium-chain alcohol dehydrogenases, catalytic domain"/>
    <property type="match status" value="1"/>
</dbReference>
<dbReference type="Gene3D" id="3.40.50.720">
    <property type="entry name" value="NAD(P)-binding Rossmann-like Domain"/>
    <property type="match status" value="1"/>
</dbReference>
<dbReference type="HAMAP" id="MF_00627">
    <property type="entry name" value="Thr_dehydrog"/>
    <property type="match status" value="1"/>
</dbReference>
<dbReference type="InterPro" id="IPR013149">
    <property type="entry name" value="ADH-like_C"/>
</dbReference>
<dbReference type="InterPro" id="IPR013154">
    <property type="entry name" value="ADH-like_N"/>
</dbReference>
<dbReference type="InterPro" id="IPR002328">
    <property type="entry name" value="ADH_Zn_CS"/>
</dbReference>
<dbReference type="InterPro" id="IPR011032">
    <property type="entry name" value="GroES-like_sf"/>
</dbReference>
<dbReference type="InterPro" id="IPR004627">
    <property type="entry name" value="L-Threonine_3-DHase"/>
</dbReference>
<dbReference type="InterPro" id="IPR036291">
    <property type="entry name" value="NAD(P)-bd_dom_sf"/>
</dbReference>
<dbReference type="InterPro" id="IPR050129">
    <property type="entry name" value="Zn_alcohol_dh"/>
</dbReference>
<dbReference type="NCBIfam" id="NF003808">
    <property type="entry name" value="PRK05396.1"/>
    <property type="match status" value="1"/>
</dbReference>
<dbReference type="NCBIfam" id="TIGR00692">
    <property type="entry name" value="tdh"/>
    <property type="match status" value="1"/>
</dbReference>
<dbReference type="PANTHER" id="PTHR43401">
    <property type="entry name" value="L-THREONINE 3-DEHYDROGENASE"/>
    <property type="match status" value="1"/>
</dbReference>
<dbReference type="PANTHER" id="PTHR43401:SF2">
    <property type="entry name" value="L-THREONINE 3-DEHYDROGENASE"/>
    <property type="match status" value="1"/>
</dbReference>
<dbReference type="Pfam" id="PF08240">
    <property type="entry name" value="ADH_N"/>
    <property type="match status" value="1"/>
</dbReference>
<dbReference type="Pfam" id="PF00107">
    <property type="entry name" value="ADH_zinc_N"/>
    <property type="match status" value="1"/>
</dbReference>
<dbReference type="SUPFAM" id="SSF50129">
    <property type="entry name" value="GroES-like"/>
    <property type="match status" value="1"/>
</dbReference>
<dbReference type="SUPFAM" id="SSF51735">
    <property type="entry name" value="NAD(P)-binding Rossmann-fold domains"/>
    <property type="match status" value="1"/>
</dbReference>
<dbReference type="PROSITE" id="PS00059">
    <property type="entry name" value="ADH_ZINC"/>
    <property type="match status" value="1"/>
</dbReference>
<evidence type="ECO:0000255" key="1">
    <source>
        <dbReference type="HAMAP-Rule" id="MF_00627"/>
    </source>
</evidence>
<proteinExistence type="inferred from homology"/>